<protein>
    <recommendedName>
        <fullName evidence="1">L-threonine 3-dehydrogenase</fullName>
        <shortName evidence="1">TDH</shortName>
        <ecNumber evidence="1">1.1.1.103</ecNumber>
    </recommendedName>
</protein>
<organism>
    <name type="scientific">Escherichia coli O6:H1 (strain CFT073 / ATCC 700928 / UPEC)</name>
    <dbReference type="NCBI Taxonomy" id="199310"/>
    <lineage>
        <taxon>Bacteria</taxon>
        <taxon>Pseudomonadati</taxon>
        <taxon>Pseudomonadota</taxon>
        <taxon>Gammaproteobacteria</taxon>
        <taxon>Enterobacterales</taxon>
        <taxon>Enterobacteriaceae</taxon>
        <taxon>Escherichia</taxon>
    </lineage>
</organism>
<comment type="function">
    <text evidence="1">Catalyzes the NAD(+)-dependent oxidation of L-threonine to 2-amino-3-ketobutyrate.</text>
</comment>
<comment type="catalytic activity">
    <reaction evidence="1">
        <text>L-threonine + NAD(+) = (2S)-2-amino-3-oxobutanoate + NADH + H(+)</text>
        <dbReference type="Rhea" id="RHEA:13161"/>
        <dbReference type="ChEBI" id="CHEBI:15378"/>
        <dbReference type="ChEBI" id="CHEBI:57540"/>
        <dbReference type="ChEBI" id="CHEBI:57926"/>
        <dbReference type="ChEBI" id="CHEBI:57945"/>
        <dbReference type="ChEBI" id="CHEBI:78948"/>
        <dbReference type="EC" id="1.1.1.103"/>
    </reaction>
</comment>
<comment type="cofactor">
    <cofactor evidence="1">
        <name>Zn(2+)</name>
        <dbReference type="ChEBI" id="CHEBI:29105"/>
    </cofactor>
    <text evidence="1">Binds 2 Zn(2+) ions per subunit.</text>
</comment>
<comment type="pathway">
    <text evidence="1">Amino-acid degradation; L-threonine degradation via oxydo-reductase pathway; glycine from L-threonine: step 1/2.</text>
</comment>
<comment type="subunit">
    <text evidence="1">Homotetramer.</text>
</comment>
<comment type="subcellular location">
    <subcellularLocation>
        <location evidence="1">Cytoplasm</location>
    </subcellularLocation>
</comment>
<comment type="similarity">
    <text evidence="1">Belongs to the zinc-containing alcohol dehydrogenase family.</text>
</comment>
<reference key="1">
    <citation type="journal article" date="2002" name="Proc. Natl. Acad. Sci. U.S.A.">
        <title>Extensive mosaic structure revealed by the complete genome sequence of uropathogenic Escherichia coli.</title>
        <authorList>
            <person name="Welch R.A."/>
            <person name="Burland V."/>
            <person name="Plunkett G. III"/>
            <person name="Redford P."/>
            <person name="Roesch P."/>
            <person name="Rasko D."/>
            <person name="Buckles E.L."/>
            <person name="Liou S.-R."/>
            <person name="Boutin A."/>
            <person name="Hackett J."/>
            <person name="Stroud D."/>
            <person name="Mayhew G.F."/>
            <person name="Rose D.J."/>
            <person name="Zhou S."/>
            <person name="Schwartz D.C."/>
            <person name="Perna N.T."/>
            <person name="Mobley H.L.T."/>
            <person name="Donnenberg M.S."/>
            <person name="Blattner F.R."/>
        </authorList>
    </citation>
    <scope>NUCLEOTIDE SEQUENCE [LARGE SCALE GENOMIC DNA]</scope>
    <source>
        <strain>CFT073 / ATCC 700928 / UPEC</strain>
    </source>
</reference>
<gene>
    <name evidence="1" type="primary">tdh</name>
    <name type="ordered locus">c4443</name>
</gene>
<proteinExistence type="inferred from homology"/>
<feature type="chain" id="PRO_0000160838" description="L-threonine 3-dehydrogenase">
    <location>
        <begin position="1"/>
        <end position="341"/>
    </location>
</feature>
<feature type="active site" description="Charge relay system" evidence="1">
    <location>
        <position position="40"/>
    </location>
</feature>
<feature type="active site" description="Charge relay system" evidence="1">
    <location>
        <position position="43"/>
    </location>
</feature>
<feature type="binding site" evidence="1">
    <location>
        <position position="38"/>
    </location>
    <ligand>
        <name>Zn(2+)</name>
        <dbReference type="ChEBI" id="CHEBI:29105"/>
        <label>1</label>
        <note>catalytic</note>
    </ligand>
</feature>
<feature type="binding site" evidence="1">
    <location>
        <position position="63"/>
    </location>
    <ligand>
        <name>Zn(2+)</name>
        <dbReference type="ChEBI" id="CHEBI:29105"/>
        <label>1</label>
        <note>catalytic</note>
    </ligand>
</feature>
<feature type="binding site" evidence="1">
    <location>
        <position position="64"/>
    </location>
    <ligand>
        <name>Zn(2+)</name>
        <dbReference type="ChEBI" id="CHEBI:29105"/>
        <label>1</label>
        <note>catalytic</note>
    </ligand>
</feature>
<feature type="binding site" evidence="1">
    <location>
        <position position="93"/>
    </location>
    <ligand>
        <name>Zn(2+)</name>
        <dbReference type="ChEBI" id="CHEBI:29105"/>
        <label>2</label>
    </ligand>
</feature>
<feature type="binding site" evidence="1">
    <location>
        <position position="96"/>
    </location>
    <ligand>
        <name>Zn(2+)</name>
        <dbReference type="ChEBI" id="CHEBI:29105"/>
        <label>2</label>
    </ligand>
</feature>
<feature type="binding site" evidence="1">
    <location>
        <position position="99"/>
    </location>
    <ligand>
        <name>Zn(2+)</name>
        <dbReference type="ChEBI" id="CHEBI:29105"/>
        <label>2</label>
    </ligand>
</feature>
<feature type="binding site" evidence="1">
    <location>
        <position position="107"/>
    </location>
    <ligand>
        <name>Zn(2+)</name>
        <dbReference type="ChEBI" id="CHEBI:29105"/>
        <label>2</label>
    </ligand>
</feature>
<feature type="binding site" evidence="1">
    <location>
        <position position="175"/>
    </location>
    <ligand>
        <name>NAD(+)</name>
        <dbReference type="ChEBI" id="CHEBI:57540"/>
    </ligand>
</feature>
<feature type="binding site" evidence="1">
    <location>
        <position position="195"/>
    </location>
    <ligand>
        <name>NAD(+)</name>
        <dbReference type="ChEBI" id="CHEBI:57540"/>
    </ligand>
</feature>
<feature type="binding site" evidence="1">
    <location>
        <position position="200"/>
    </location>
    <ligand>
        <name>NAD(+)</name>
        <dbReference type="ChEBI" id="CHEBI:57540"/>
    </ligand>
</feature>
<feature type="binding site" evidence="1">
    <location>
        <begin position="262"/>
        <end position="264"/>
    </location>
    <ligand>
        <name>NAD(+)</name>
        <dbReference type="ChEBI" id="CHEBI:57540"/>
    </ligand>
</feature>
<feature type="binding site" evidence="1">
    <location>
        <begin position="286"/>
        <end position="287"/>
    </location>
    <ligand>
        <name>NAD(+)</name>
        <dbReference type="ChEBI" id="CHEBI:57540"/>
    </ligand>
</feature>
<feature type="site" description="Important for catalytic activity for the proton relay mechanism but does not participate directly in the coordination of zinc atom" evidence="1">
    <location>
        <position position="148"/>
    </location>
</feature>
<evidence type="ECO:0000255" key="1">
    <source>
        <dbReference type="HAMAP-Rule" id="MF_00627"/>
    </source>
</evidence>
<sequence>MKALSKLKAEEGIWMTDVPVPELGHNDLLIKIRKTAICGTDVHIYNWDEWSQKTIPVPMVVGHEYVGEVVGIGQEVKGFKIGDRVSGEGHITCGHCRNCRGGRTHLCRNTIGVGVNRPGCFAEYLVIPAFNAFKIPDNISDDLASIFDPFGNAVHTALSFDLVGEDVLVSGAGPIGIMAAAVAKHVGARNVVITDVNEYRLELARKMGITRAVNVAKENLNDVMTELGMTEGFDVGLEMSGAPPAFRTMLDTMNHGGRIAMLGIPPSDMSIDWTKVIFKGLFIKGIYGREMFETWYKMAALIQSGLDLSPIITHRFSIDDFQKGFDAMRSGQSGKVILSWD</sequence>
<keyword id="KW-0963">Cytoplasm</keyword>
<keyword id="KW-0479">Metal-binding</keyword>
<keyword id="KW-0520">NAD</keyword>
<keyword id="KW-0560">Oxidoreductase</keyword>
<keyword id="KW-1185">Reference proteome</keyword>
<keyword id="KW-0862">Zinc</keyword>
<name>TDH_ECOL6</name>
<accession>Q8FCA2</accession>
<dbReference type="EC" id="1.1.1.103" evidence="1"/>
<dbReference type="EMBL" id="AE014075">
    <property type="protein sequence ID" value="AAN82879.1"/>
    <property type="molecule type" value="Genomic_DNA"/>
</dbReference>
<dbReference type="RefSeq" id="WP_000646018.1">
    <property type="nucleotide sequence ID" value="NZ_CP051263.1"/>
</dbReference>
<dbReference type="SMR" id="Q8FCA2"/>
<dbReference type="STRING" id="199310.c4443"/>
<dbReference type="KEGG" id="ecc:c4443"/>
<dbReference type="eggNOG" id="COG1063">
    <property type="taxonomic scope" value="Bacteria"/>
</dbReference>
<dbReference type="HOGENOM" id="CLU_026673_11_0_6"/>
<dbReference type="BioCyc" id="ECOL199310:C4443-MONOMER"/>
<dbReference type="UniPathway" id="UPA00046">
    <property type="reaction ID" value="UER00505"/>
</dbReference>
<dbReference type="Proteomes" id="UP000001410">
    <property type="component" value="Chromosome"/>
</dbReference>
<dbReference type="GO" id="GO:0005737">
    <property type="term" value="C:cytoplasm"/>
    <property type="evidence" value="ECO:0007669"/>
    <property type="project" value="UniProtKB-SubCell"/>
</dbReference>
<dbReference type="GO" id="GO:0008743">
    <property type="term" value="F:L-threonine 3-dehydrogenase activity"/>
    <property type="evidence" value="ECO:0007669"/>
    <property type="project" value="UniProtKB-UniRule"/>
</dbReference>
<dbReference type="GO" id="GO:0008270">
    <property type="term" value="F:zinc ion binding"/>
    <property type="evidence" value="ECO:0007669"/>
    <property type="project" value="UniProtKB-UniRule"/>
</dbReference>
<dbReference type="GO" id="GO:0019518">
    <property type="term" value="P:L-threonine catabolic process to glycine"/>
    <property type="evidence" value="ECO:0007669"/>
    <property type="project" value="UniProtKB-UniPathway"/>
</dbReference>
<dbReference type="FunFam" id="3.40.50.720:FF:000059">
    <property type="entry name" value="L-threonine 3-dehydrogenase"/>
    <property type="match status" value="1"/>
</dbReference>
<dbReference type="Gene3D" id="3.90.180.10">
    <property type="entry name" value="Medium-chain alcohol dehydrogenases, catalytic domain"/>
    <property type="match status" value="1"/>
</dbReference>
<dbReference type="Gene3D" id="3.40.50.720">
    <property type="entry name" value="NAD(P)-binding Rossmann-like Domain"/>
    <property type="match status" value="1"/>
</dbReference>
<dbReference type="HAMAP" id="MF_00627">
    <property type="entry name" value="Thr_dehydrog"/>
    <property type="match status" value="1"/>
</dbReference>
<dbReference type="InterPro" id="IPR013149">
    <property type="entry name" value="ADH-like_C"/>
</dbReference>
<dbReference type="InterPro" id="IPR013154">
    <property type="entry name" value="ADH-like_N"/>
</dbReference>
<dbReference type="InterPro" id="IPR002328">
    <property type="entry name" value="ADH_Zn_CS"/>
</dbReference>
<dbReference type="InterPro" id="IPR011032">
    <property type="entry name" value="GroES-like_sf"/>
</dbReference>
<dbReference type="InterPro" id="IPR004627">
    <property type="entry name" value="L-Threonine_3-DHase"/>
</dbReference>
<dbReference type="InterPro" id="IPR036291">
    <property type="entry name" value="NAD(P)-bd_dom_sf"/>
</dbReference>
<dbReference type="InterPro" id="IPR020843">
    <property type="entry name" value="PKS_ER"/>
</dbReference>
<dbReference type="InterPro" id="IPR050129">
    <property type="entry name" value="Zn_alcohol_dh"/>
</dbReference>
<dbReference type="NCBIfam" id="NF003808">
    <property type="entry name" value="PRK05396.1"/>
    <property type="match status" value="1"/>
</dbReference>
<dbReference type="NCBIfam" id="TIGR00692">
    <property type="entry name" value="tdh"/>
    <property type="match status" value="1"/>
</dbReference>
<dbReference type="PANTHER" id="PTHR43401">
    <property type="entry name" value="L-THREONINE 3-DEHYDROGENASE"/>
    <property type="match status" value="1"/>
</dbReference>
<dbReference type="PANTHER" id="PTHR43401:SF2">
    <property type="entry name" value="L-THREONINE 3-DEHYDROGENASE"/>
    <property type="match status" value="1"/>
</dbReference>
<dbReference type="Pfam" id="PF08240">
    <property type="entry name" value="ADH_N"/>
    <property type="match status" value="1"/>
</dbReference>
<dbReference type="Pfam" id="PF00107">
    <property type="entry name" value="ADH_zinc_N"/>
    <property type="match status" value="1"/>
</dbReference>
<dbReference type="SMART" id="SM00829">
    <property type="entry name" value="PKS_ER"/>
    <property type="match status" value="1"/>
</dbReference>
<dbReference type="SUPFAM" id="SSF50129">
    <property type="entry name" value="GroES-like"/>
    <property type="match status" value="1"/>
</dbReference>
<dbReference type="SUPFAM" id="SSF51735">
    <property type="entry name" value="NAD(P)-binding Rossmann-fold domains"/>
    <property type="match status" value="1"/>
</dbReference>
<dbReference type="PROSITE" id="PS00059">
    <property type="entry name" value="ADH_ZINC"/>
    <property type="match status" value="1"/>
</dbReference>